<reference key="1">
    <citation type="journal article" date="2004" name="Nucleic Acids Res.">
        <title>The genome sequence of Bacillus cereus ATCC 10987 reveals metabolic adaptations and a large plasmid related to Bacillus anthracis pXO1.</title>
        <authorList>
            <person name="Rasko D.A."/>
            <person name="Ravel J."/>
            <person name="Oekstad O.A."/>
            <person name="Helgason E."/>
            <person name="Cer R.Z."/>
            <person name="Jiang L."/>
            <person name="Shores K.A."/>
            <person name="Fouts D.E."/>
            <person name="Tourasse N.J."/>
            <person name="Angiuoli S.V."/>
            <person name="Kolonay J.F."/>
            <person name="Nelson W.C."/>
            <person name="Kolstoe A.-B."/>
            <person name="Fraser C.M."/>
            <person name="Read T.D."/>
        </authorList>
    </citation>
    <scope>NUCLEOTIDE SEQUENCE [LARGE SCALE GENOMIC DNA]</scope>
    <source>
        <strain>ATCC 10987 / NRS 248</strain>
    </source>
</reference>
<name>MTNW_BACC1</name>
<evidence type="ECO:0000255" key="1">
    <source>
        <dbReference type="HAMAP-Rule" id="MF_01679"/>
    </source>
</evidence>
<feature type="chain" id="PRO_0000062688" description="2,3-diketo-5-methylthiopentyl-1-phosphate enolase">
    <location>
        <begin position="1"/>
        <end position="414"/>
    </location>
</feature>
<feature type="active site" description="Proton acceptor" evidence="1">
    <location>
        <position position="99"/>
    </location>
</feature>
<feature type="binding site" evidence="1">
    <location>
        <position position="148"/>
    </location>
    <ligand>
        <name>substrate</name>
    </ligand>
</feature>
<feature type="binding site" evidence="1">
    <location>
        <begin position="174"/>
        <end position="177"/>
    </location>
    <ligand>
        <name>substrate</name>
    </ligand>
</feature>
<feature type="binding site" description="via carbamate group" evidence="1">
    <location>
        <position position="174"/>
    </location>
    <ligand>
        <name>Mg(2+)</name>
        <dbReference type="ChEBI" id="CHEBI:18420"/>
    </ligand>
</feature>
<feature type="binding site" evidence="1">
    <location>
        <position position="176"/>
    </location>
    <ligand>
        <name>Mg(2+)</name>
        <dbReference type="ChEBI" id="CHEBI:18420"/>
    </ligand>
</feature>
<feature type="binding site" evidence="1">
    <location>
        <position position="177"/>
    </location>
    <ligand>
        <name>Mg(2+)</name>
        <dbReference type="ChEBI" id="CHEBI:18420"/>
    </ligand>
</feature>
<feature type="binding site" evidence="1">
    <location>
        <position position="265"/>
    </location>
    <ligand>
        <name>substrate</name>
    </ligand>
</feature>
<feature type="binding site" evidence="1">
    <location>
        <position position="338"/>
    </location>
    <ligand>
        <name>substrate</name>
    </ligand>
</feature>
<feature type="binding site" evidence="1">
    <location>
        <begin position="360"/>
        <end position="361"/>
    </location>
    <ligand>
        <name>substrate</name>
    </ligand>
</feature>
<feature type="modified residue" description="N6-carboxylysine" evidence="1">
    <location>
        <position position="174"/>
    </location>
</feature>
<dbReference type="EC" id="5.3.2.5" evidence="1"/>
<dbReference type="EMBL" id="AE017194">
    <property type="protein sequence ID" value="AAS43005.1"/>
    <property type="molecule type" value="Genomic_DNA"/>
</dbReference>
<dbReference type="SMR" id="Q731R2"/>
<dbReference type="KEGG" id="bca:BCE_4103"/>
<dbReference type="HOGENOM" id="CLU_031450_3_1_9"/>
<dbReference type="UniPathway" id="UPA00904">
    <property type="reaction ID" value="UER00876"/>
</dbReference>
<dbReference type="Proteomes" id="UP000002527">
    <property type="component" value="Chromosome"/>
</dbReference>
<dbReference type="GO" id="GO:0043715">
    <property type="term" value="F:2,3-diketo-5-methylthiopentyl-1-phosphate enolase activity"/>
    <property type="evidence" value="ECO:0007669"/>
    <property type="project" value="UniProtKB-UniRule"/>
</dbReference>
<dbReference type="GO" id="GO:0000287">
    <property type="term" value="F:magnesium ion binding"/>
    <property type="evidence" value="ECO:0007669"/>
    <property type="project" value="UniProtKB-UniRule"/>
</dbReference>
<dbReference type="GO" id="GO:0016984">
    <property type="term" value="F:ribulose-bisphosphate carboxylase activity"/>
    <property type="evidence" value="ECO:0007669"/>
    <property type="project" value="InterPro"/>
</dbReference>
<dbReference type="GO" id="GO:0015977">
    <property type="term" value="P:carbon fixation"/>
    <property type="evidence" value="ECO:0007669"/>
    <property type="project" value="InterPro"/>
</dbReference>
<dbReference type="GO" id="GO:0019509">
    <property type="term" value="P:L-methionine salvage from methylthioadenosine"/>
    <property type="evidence" value="ECO:0007669"/>
    <property type="project" value="UniProtKB-UniRule"/>
</dbReference>
<dbReference type="CDD" id="cd08209">
    <property type="entry name" value="RLP_DK-MTP-1-P-enolase"/>
    <property type="match status" value="1"/>
</dbReference>
<dbReference type="FunFam" id="3.20.20.110:FF:000002">
    <property type="entry name" value="2,3-diketo-5-methylthiopentyl-1-phosphate enolase"/>
    <property type="match status" value="1"/>
</dbReference>
<dbReference type="Gene3D" id="3.20.20.110">
    <property type="entry name" value="Ribulose bisphosphate carboxylase, large subunit, C-terminal domain"/>
    <property type="match status" value="1"/>
</dbReference>
<dbReference type="Gene3D" id="3.30.70.150">
    <property type="entry name" value="RuBisCO large subunit, N-terminal domain"/>
    <property type="match status" value="1"/>
</dbReference>
<dbReference type="HAMAP" id="MF_01679">
    <property type="entry name" value="Salvage_MtnW"/>
    <property type="match status" value="1"/>
</dbReference>
<dbReference type="InterPro" id="IPR017717">
    <property type="entry name" value="Diketo-Methiopentyl-P_enolase"/>
</dbReference>
<dbReference type="InterPro" id="IPR033966">
    <property type="entry name" value="RuBisCO"/>
</dbReference>
<dbReference type="InterPro" id="IPR000685">
    <property type="entry name" value="RuBisCO_lsu_C"/>
</dbReference>
<dbReference type="InterPro" id="IPR036376">
    <property type="entry name" value="RuBisCO_lsu_C_sf"/>
</dbReference>
<dbReference type="InterPro" id="IPR017443">
    <property type="entry name" value="RuBisCO_lsu_fd_N"/>
</dbReference>
<dbReference type="InterPro" id="IPR036422">
    <property type="entry name" value="RuBisCO_lsu_N_sf"/>
</dbReference>
<dbReference type="NCBIfam" id="NF007095">
    <property type="entry name" value="PRK09549.1"/>
    <property type="match status" value="1"/>
</dbReference>
<dbReference type="NCBIfam" id="TIGR03332">
    <property type="entry name" value="salvage_mtnW"/>
    <property type="match status" value="1"/>
</dbReference>
<dbReference type="PANTHER" id="PTHR42704">
    <property type="entry name" value="RIBULOSE BISPHOSPHATE CARBOXYLASE"/>
    <property type="match status" value="1"/>
</dbReference>
<dbReference type="PANTHER" id="PTHR42704:SF17">
    <property type="entry name" value="RIBULOSE BISPHOSPHATE CARBOXYLASE LARGE CHAIN"/>
    <property type="match status" value="1"/>
</dbReference>
<dbReference type="Pfam" id="PF00016">
    <property type="entry name" value="RuBisCO_large"/>
    <property type="match status" value="1"/>
</dbReference>
<dbReference type="Pfam" id="PF02788">
    <property type="entry name" value="RuBisCO_large_N"/>
    <property type="match status" value="1"/>
</dbReference>
<dbReference type="SFLD" id="SFLDF00157">
    <property type="entry name" value="2_3-diketo-5-methylthiopentyl"/>
    <property type="match status" value="1"/>
</dbReference>
<dbReference type="SFLD" id="SFLDS00014">
    <property type="entry name" value="RuBisCO"/>
    <property type="match status" value="1"/>
</dbReference>
<dbReference type="SUPFAM" id="SSF51649">
    <property type="entry name" value="RuBisCo, C-terminal domain"/>
    <property type="match status" value="1"/>
</dbReference>
<dbReference type="SUPFAM" id="SSF54966">
    <property type="entry name" value="RuBisCO, large subunit, small (N-terminal) domain"/>
    <property type="match status" value="1"/>
</dbReference>
<proteinExistence type="inferred from homology"/>
<accession>Q731R2</accession>
<keyword id="KW-0028">Amino-acid biosynthesis</keyword>
<keyword id="KW-0413">Isomerase</keyword>
<keyword id="KW-0460">Magnesium</keyword>
<keyword id="KW-0479">Metal-binding</keyword>
<keyword id="KW-0486">Methionine biosynthesis</keyword>
<sequence length="414" mass="45388">MSGIIATYLIHDDSHNLEKKAEQIALGLTIGSWTHLPHLLQEQLKQHKGNVIHVEELAAHEHTNSYLRKKVKRGIIKIEYPLLNFSPDLPAILTTTFGKLSLDGEVKLIDLTFSDELKKQFPGPKFGIDGIRNLLQVHDRPLLMSIFKGMIGRNIGYLKTQLRDQAIGGVDIVKDDEILFENALTPLTKRIVSGKEVLQSVYETYGHKTLYAVNLTGRTFDLKENAKRAVQAGADILLFNVFSYGLDVLQSLAEDDEIPLPIMAHPAVSGAYSASKLYGVSSPLLLGKLLRYAGADFSLFPSPYGSVALEKEEALAISKYLTEGDSFFKKSFSVPSAGIHPGFVPFIVRDFGKDVVINAGGGIHGHPNGAQGGGKAFRAAIDATLQNKPLHEVDDINLHSALQIWGNPSHEVKL</sequence>
<organism>
    <name type="scientific">Bacillus cereus (strain ATCC 10987 / NRS 248)</name>
    <dbReference type="NCBI Taxonomy" id="222523"/>
    <lineage>
        <taxon>Bacteria</taxon>
        <taxon>Bacillati</taxon>
        <taxon>Bacillota</taxon>
        <taxon>Bacilli</taxon>
        <taxon>Bacillales</taxon>
        <taxon>Bacillaceae</taxon>
        <taxon>Bacillus</taxon>
        <taxon>Bacillus cereus group</taxon>
    </lineage>
</organism>
<protein>
    <recommendedName>
        <fullName evidence="1">2,3-diketo-5-methylthiopentyl-1-phosphate enolase</fullName>
        <shortName evidence="1">DK-MTP-1-P enolase</shortName>
        <ecNumber evidence="1">5.3.2.5</ecNumber>
    </recommendedName>
    <alternativeName>
        <fullName evidence="1">RuBisCO-like protein</fullName>
        <shortName evidence="1">RLP</shortName>
    </alternativeName>
</protein>
<comment type="function">
    <text evidence="1">Catalyzes the enolization of 2,3-diketo-5-methylthiopentyl-1-phosphate (DK-MTP-1-P) into 2-hydroxy-3-keto-5-methylthiopentenyl-1-phosphate (HK-MTPenyl-1-P).</text>
</comment>
<comment type="catalytic activity">
    <reaction evidence="1">
        <text>5-methylsulfanyl-2,3-dioxopentyl phosphate = 2-hydroxy-5-methylsulfanyl-3-oxopent-1-enyl phosphate</text>
        <dbReference type="Rhea" id="RHEA:18769"/>
        <dbReference type="ChEBI" id="CHEBI:58828"/>
        <dbReference type="ChEBI" id="CHEBI:59505"/>
        <dbReference type="EC" id="5.3.2.5"/>
    </reaction>
</comment>
<comment type="cofactor">
    <cofactor evidence="1">
        <name>Mg(2+)</name>
        <dbReference type="ChEBI" id="CHEBI:18420"/>
    </cofactor>
    <text evidence="1">Binds 1 Mg(2+) ion per subunit.</text>
</comment>
<comment type="pathway">
    <text evidence="1">Amino-acid biosynthesis; L-methionine biosynthesis via salvage pathway; L-methionine from S-methyl-5-thio-alpha-D-ribose 1-phosphate: step 3/6.</text>
</comment>
<comment type="subunit">
    <text evidence="1">Homodimer.</text>
</comment>
<comment type="miscellaneous">
    <text evidence="1">Has no RuBP-carboxylation activity.</text>
</comment>
<comment type="similarity">
    <text evidence="1">Belongs to the RuBisCO large chain family. Type IV subfamily.</text>
</comment>
<gene>
    <name evidence="1" type="primary">mtnW</name>
    <name type="ordered locus">BCE_4103</name>
</gene>